<reference key="1">
    <citation type="journal article" date="1998" name="Science">
        <title>Genome sequence of the nematode C. elegans: a platform for investigating biology.</title>
        <authorList>
            <consortium name="The C. elegans sequencing consortium"/>
        </authorList>
    </citation>
    <scope>NUCLEOTIDE SEQUENCE [LARGE SCALE GENOMIC DNA]</scope>
    <scope>ALTERNATIVE SPLICING</scope>
    <source>
        <strain>Bristol N2</strain>
    </source>
</reference>
<protein>
    <recommendedName>
        <fullName>Pleckstrin homology domain-containing family D member 1</fullName>
        <shortName>PH domain-containing family D member 1</shortName>
    </recommendedName>
</protein>
<name>PLHD1_CAEEL</name>
<dbReference type="EMBL" id="Z92832">
    <property type="protein sequence ID" value="CAV31773.1"/>
    <property type="molecule type" value="Genomic_DNA"/>
</dbReference>
<dbReference type="EMBL" id="Z92832">
    <property type="protein sequence ID" value="CAV31774.1"/>
    <property type="molecule type" value="Genomic_DNA"/>
</dbReference>
<dbReference type="PIR" id="T21596">
    <property type="entry name" value="T21596"/>
</dbReference>
<dbReference type="RefSeq" id="NP_001256959.1">
    <molecule id="O45420-1"/>
    <property type="nucleotide sequence ID" value="NM_001270030.2"/>
</dbReference>
<dbReference type="RefSeq" id="NP_001256960.1">
    <molecule id="O45420-2"/>
    <property type="nucleotide sequence ID" value="NM_001270031.4"/>
</dbReference>
<dbReference type="SMR" id="O45420"/>
<dbReference type="BioGRID" id="45329">
    <property type="interactions" value="1"/>
</dbReference>
<dbReference type="STRING" id="6239.F31D4.5a.1"/>
<dbReference type="PaxDb" id="6239-F31D4.5a"/>
<dbReference type="PeptideAtlas" id="O45420"/>
<dbReference type="EnsemblMetazoa" id="F31D4.5a.1">
    <molecule id="O45420-1"/>
    <property type="protein sequence ID" value="F31D4.5a.1"/>
    <property type="gene ID" value="WBGene00009292"/>
</dbReference>
<dbReference type="EnsemblMetazoa" id="F31D4.5b.1">
    <molecule id="O45420-2"/>
    <property type="protein sequence ID" value="F31D4.5b.1"/>
    <property type="gene ID" value="WBGene00009292"/>
</dbReference>
<dbReference type="GeneID" id="180373"/>
<dbReference type="KEGG" id="cel:CELE_F31D4.5"/>
<dbReference type="UCSC" id="F31D4.5">
    <molecule id="O45420-1"/>
    <property type="organism name" value="c. elegans"/>
</dbReference>
<dbReference type="AGR" id="WB:WBGene00009292"/>
<dbReference type="CTD" id="180373"/>
<dbReference type="WormBase" id="F31D4.5a">
    <molecule id="O45420-1"/>
    <property type="protein sequence ID" value="CE43424"/>
    <property type="gene ID" value="WBGene00009292"/>
</dbReference>
<dbReference type="WormBase" id="F31D4.5b">
    <molecule id="O45420-2"/>
    <property type="protein sequence ID" value="CE43425"/>
    <property type="gene ID" value="WBGene00009292"/>
</dbReference>
<dbReference type="eggNOG" id="ENOG502QTF5">
    <property type="taxonomic scope" value="Eukaryota"/>
</dbReference>
<dbReference type="GeneTree" id="ENSGT00950000183017"/>
<dbReference type="HOGENOM" id="CLU_035364_0_0_1"/>
<dbReference type="InParanoid" id="O45420"/>
<dbReference type="OMA" id="MNLHPKG"/>
<dbReference type="OrthoDB" id="185175at2759"/>
<dbReference type="PhylomeDB" id="O45420"/>
<dbReference type="PRO" id="PR:O45420"/>
<dbReference type="Proteomes" id="UP000001940">
    <property type="component" value="Chromosome V"/>
</dbReference>
<dbReference type="Bgee" id="WBGene00009292">
    <property type="expression patterns" value="Expressed in embryo and 3 other cell types or tissues"/>
</dbReference>
<dbReference type="CDD" id="cd13281">
    <property type="entry name" value="PH_PLEKHD1"/>
    <property type="match status" value="1"/>
</dbReference>
<dbReference type="Gene3D" id="2.30.29.30">
    <property type="entry name" value="Pleckstrin-homology domain (PH domain)/Phosphotyrosine-binding domain (PTB)"/>
    <property type="match status" value="1"/>
</dbReference>
<dbReference type="InterPro" id="IPR011993">
    <property type="entry name" value="PH-like_dom_sf"/>
</dbReference>
<dbReference type="InterPro" id="IPR001849">
    <property type="entry name" value="PH_domain"/>
</dbReference>
<dbReference type="PANTHER" id="PTHR14383:SF1">
    <property type="entry name" value="PLECKSTRIN HOMOLOGY DOMAIN-CONTAINING FAMILY D MEMBER 1"/>
    <property type="match status" value="1"/>
</dbReference>
<dbReference type="PANTHER" id="PTHR14383">
    <property type="entry name" value="SWAP-70 RECOMBINASE"/>
    <property type="match status" value="1"/>
</dbReference>
<dbReference type="Pfam" id="PF00169">
    <property type="entry name" value="PH"/>
    <property type="match status" value="1"/>
</dbReference>
<dbReference type="SMART" id="SM00233">
    <property type="entry name" value="PH"/>
    <property type="match status" value="1"/>
</dbReference>
<dbReference type="SUPFAM" id="SSF50729">
    <property type="entry name" value="PH domain-like"/>
    <property type="match status" value="1"/>
</dbReference>
<dbReference type="PROSITE" id="PS50003">
    <property type="entry name" value="PH_DOMAIN"/>
    <property type="match status" value="1"/>
</dbReference>
<keyword id="KW-0025">Alternative splicing</keyword>
<keyword id="KW-0175">Coiled coil</keyword>
<keyword id="KW-1185">Reference proteome</keyword>
<sequence>MTTKTTPKELKAKKESKKKGSAPEPPKNGPPRTSPPNTIEKKGILRSLSFQFSNLTRKKGNDYDLTPEEEGDGYGDEMGPVLGVQNYGILMKKYKRKNRSARWAKRFFVLKECFLIYYSTSYKKVFEKTRRIDLHPKGIIPLIGCSIVSGGDVDKKNCLLIAHPQLPSAIIVAASDHQTQEMWLKALRSATKISYKNTVVGETMIRELENRGVLLNEEKKSYEERLEAEAKARKEEHDRADELAKDKEELEAEREKLIRTTKKLKDDLQNVKNELKMTNEMKKTLEQEKMSLNSKTEHLQANMESLNIEKEKIHEQLQEIVREREKVLIDNQNLSTDKCQLNNRLMEIETSRNCIMTEKEKIENLLKMNEQKTQDLEKERQYYTMKTSELMDHLKEVSEQRDLTESELKEQMMARLGAEKQLQAAEKALEHLEMALKMTGAQMTELQEHIMPDVHKLREFFEQCAEESRFEANRTGIMRNAVYARKSIFDVAFSELDGHSLDVFEKFCEYNSQVLPVREKPQKLHKTWKQSSFKRIGSIRRSKRGIRSSFRKKTDSITTQPREKEPLMQL</sequence>
<gene>
    <name type="ORF">F31D4.5</name>
</gene>
<feature type="chain" id="PRO_0000349198" description="Pleckstrin homology domain-containing family D member 1">
    <location>
        <begin position="1"/>
        <end position="570"/>
    </location>
</feature>
<feature type="domain" description="PH" evidence="2">
    <location>
        <begin position="83"/>
        <end position="192"/>
    </location>
</feature>
<feature type="region of interest" description="Disordered" evidence="3">
    <location>
        <begin position="1"/>
        <end position="42"/>
    </location>
</feature>
<feature type="region of interest" description="Disordered" evidence="3">
    <location>
        <begin position="542"/>
        <end position="570"/>
    </location>
</feature>
<feature type="coiled-coil region" evidence="1">
    <location>
        <begin position="202"/>
        <end position="448"/>
    </location>
</feature>
<feature type="compositionally biased region" description="Basic and acidic residues" evidence="3">
    <location>
        <begin position="1"/>
        <end position="13"/>
    </location>
</feature>
<feature type="compositionally biased region" description="Pro residues" evidence="3">
    <location>
        <begin position="23"/>
        <end position="34"/>
    </location>
</feature>
<feature type="compositionally biased region" description="Basic residues" evidence="3">
    <location>
        <begin position="542"/>
        <end position="551"/>
    </location>
</feature>
<feature type="compositionally biased region" description="Basic and acidic residues" evidence="3">
    <location>
        <begin position="561"/>
        <end position="570"/>
    </location>
</feature>
<feature type="splice variant" id="VSP_038217" description="In isoform b." evidence="4">
    <location>
        <begin position="489"/>
        <end position="539"/>
    </location>
</feature>
<accession>O45420</accession>
<accession>B7WNA6</accession>
<accession>B7WNA7</accession>
<comment type="alternative products">
    <event type="alternative splicing"/>
    <isoform>
        <id>O45420-1</id>
        <name>a</name>
        <sequence type="displayed"/>
    </isoform>
    <isoform>
        <id>O45420-2</id>
        <name>b</name>
        <sequence type="described" ref="VSP_038217"/>
    </isoform>
</comment>
<comment type="similarity">
    <text evidence="4">Belongs to the PLEKHD1 family.</text>
</comment>
<organism>
    <name type="scientific">Caenorhabditis elegans</name>
    <dbReference type="NCBI Taxonomy" id="6239"/>
    <lineage>
        <taxon>Eukaryota</taxon>
        <taxon>Metazoa</taxon>
        <taxon>Ecdysozoa</taxon>
        <taxon>Nematoda</taxon>
        <taxon>Chromadorea</taxon>
        <taxon>Rhabditida</taxon>
        <taxon>Rhabditina</taxon>
        <taxon>Rhabditomorpha</taxon>
        <taxon>Rhabditoidea</taxon>
        <taxon>Rhabditidae</taxon>
        <taxon>Peloderinae</taxon>
        <taxon>Caenorhabditis</taxon>
    </lineage>
</organism>
<proteinExistence type="inferred from homology"/>
<evidence type="ECO:0000255" key="1"/>
<evidence type="ECO:0000255" key="2">
    <source>
        <dbReference type="PROSITE-ProRule" id="PRU00145"/>
    </source>
</evidence>
<evidence type="ECO:0000256" key="3">
    <source>
        <dbReference type="SAM" id="MobiDB-lite"/>
    </source>
</evidence>
<evidence type="ECO:0000305" key="4"/>